<proteinExistence type="evidence at transcript level"/>
<evidence type="ECO:0000250" key="1">
    <source>
        <dbReference type="UniProtKB" id="Q8WUX9"/>
    </source>
</evidence>
<evidence type="ECO:0000255" key="2"/>
<evidence type="ECO:0000256" key="3">
    <source>
        <dbReference type="SAM" id="MobiDB-lite"/>
    </source>
</evidence>
<evidence type="ECO:0000305" key="4"/>
<feature type="chain" id="PRO_0000211522" description="Charged multivesicular body protein 7">
    <location>
        <begin position="1"/>
        <end position="468"/>
    </location>
</feature>
<feature type="region of interest" description="Disordered" evidence="3">
    <location>
        <begin position="428"/>
        <end position="468"/>
    </location>
</feature>
<feature type="coiled-coil region" evidence="2">
    <location>
        <begin position="233"/>
        <end position="303"/>
    </location>
</feature>
<feature type="coiled-coil region" evidence="2">
    <location>
        <begin position="353"/>
        <end position="379"/>
    </location>
</feature>
<sequence length="468" mass="52908">MAALSCYPPEWDDDERMSFLFSAFKQTRDVNTSDWDGKMKFWIPLILKHARAQGLLSISLSQLERDFRRKGFAPLGLRIVIQEMMRQGTLRKESDYVSNVSSGWLSWGMRQLVIRPLRWTIGTVLGSQMGPDEPLVIPEIIKERAALVLQRYQSSPLRALPLLSEEEVRTLCAEICPNPSALNLVLLQLQGDKKICVLERAGKKLVKFVRVSVGQVDPISESDLGIYELQQSEKLLSERLQSAGEESDRLTEEARTYNRAGNKHQALRCLRKRKLLERRITELQNKQDTVQGILERIAAAETDRKVVSAYQMGVSALKLALKDVTMEKAESIVDQIQEYCDLQDDLSQTLASVSDADIDSEDLEKELNDILQNKEMIVDLPDVPSGPVVISPQRPTEWETDQDIDSEDLEKELNDILQKEEMIVDLPDVPSGPVVISPQRPTEWKTDQASRSPADGSFSRSVPEPVLQ</sequence>
<organism>
    <name type="scientific">Xenopus tropicalis</name>
    <name type="common">Western clawed frog</name>
    <name type="synonym">Silurana tropicalis</name>
    <dbReference type="NCBI Taxonomy" id="8364"/>
    <lineage>
        <taxon>Eukaryota</taxon>
        <taxon>Metazoa</taxon>
        <taxon>Chordata</taxon>
        <taxon>Craniata</taxon>
        <taxon>Vertebrata</taxon>
        <taxon>Euteleostomi</taxon>
        <taxon>Amphibia</taxon>
        <taxon>Batrachia</taxon>
        <taxon>Anura</taxon>
        <taxon>Pipoidea</taxon>
        <taxon>Pipidae</taxon>
        <taxon>Xenopodinae</taxon>
        <taxon>Xenopus</taxon>
        <taxon>Silurana</taxon>
    </lineage>
</organism>
<comment type="function">
    <text evidence="1">ESCRT-III-like protein required to recruit the ESCRT-III complex to the nuclear envelope during late anaphase. Together with SPAST, the ESCRT-III complex promotes nuclear envelope sealing and mitotic spindle disassembly during late anaphase. Plays a role in the endosomal sorting pathway.</text>
</comment>
<comment type="subcellular location">
    <subcellularLocation>
        <location evidence="1">Cytoplasm</location>
    </subcellularLocation>
    <subcellularLocation>
        <location evidence="1">Nucleus envelope</location>
    </subcellularLocation>
    <text evidence="1">Diffused localization, with some punctate distribution, especially in the perinuclear area. Localizes to the nucleus envelope during late anaphase.</text>
</comment>
<comment type="similarity">
    <text evidence="4">Belongs to the SNF7 family.</text>
</comment>
<gene>
    <name type="primary">chmp7</name>
</gene>
<reference key="1">
    <citation type="submission" date="2005-02" db="EMBL/GenBank/DDBJ databases">
        <authorList>
            <consortium name="NIH - Xenopus Gene Collection (XGC) project"/>
        </authorList>
    </citation>
    <scope>NUCLEOTIDE SEQUENCE [LARGE SCALE MRNA]</scope>
</reference>
<dbReference type="EMBL" id="BC089669">
    <property type="protein sequence ID" value="AAH89669.1"/>
    <property type="molecule type" value="mRNA"/>
</dbReference>
<dbReference type="RefSeq" id="NP_001015735.1">
    <property type="nucleotide sequence ID" value="NM_001015735.1"/>
</dbReference>
<dbReference type="FunCoup" id="Q5FW14">
    <property type="interactions" value="2502"/>
</dbReference>
<dbReference type="STRING" id="8364.ENSXETP00000041424"/>
<dbReference type="DNASU" id="548452"/>
<dbReference type="GeneID" id="548452"/>
<dbReference type="KEGG" id="xtr:548452"/>
<dbReference type="AGR" id="Xenbase:XB-GENE-5867894"/>
<dbReference type="CTD" id="91782"/>
<dbReference type="Xenbase" id="XB-GENE-5867894">
    <property type="gene designation" value="chmp7"/>
</dbReference>
<dbReference type="InParanoid" id="Q5FW14"/>
<dbReference type="OrthoDB" id="10250120at2759"/>
<dbReference type="Reactome" id="R-XTR-1632852">
    <property type="pathway name" value="Macroautophagy"/>
</dbReference>
<dbReference type="Reactome" id="R-XTR-917729">
    <property type="pathway name" value="Endosomal Sorting Complex Required For Transport (ESCRT)"/>
</dbReference>
<dbReference type="Reactome" id="R-XTR-9668328">
    <property type="pathway name" value="Sealing of the nuclear envelope (NE) by ESCRT-III"/>
</dbReference>
<dbReference type="Proteomes" id="UP000008143">
    <property type="component" value="Chromosome 3"/>
</dbReference>
<dbReference type="GO" id="GO:0000815">
    <property type="term" value="C:ESCRT III complex"/>
    <property type="evidence" value="ECO:0000250"/>
    <property type="project" value="UniProtKB"/>
</dbReference>
<dbReference type="GO" id="GO:0005635">
    <property type="term" value="C:nuclear envelope"/>
    <property type="evidence" value="ECO:0000250"/>
    <property type="project" value="UniProtKB"/>
</dbReference>
<dbReference type="GO" id="GO:0010458">
    <property type="term" value="P:exit from mitosis"/>
    <property type="evidence" value="ECO:0000250"/>
    <property type="project" value="UniProtKB"/>
</dbReference>
<dbReference type="GO" id="GO:0045324">
    <property type="term" value="P:late endosome to vacuole transport"/>
    <property type="evidence" value="ECO:0000250"/>
    <property type="project" value="UniProtKB"/>
</dbReference>
<dbReference type="GO" id="GO:0031468">
    <property type="term" value="P:nuclear membrane reassembly"/>
    <property type="evidence" value="ECO:0000250"/>
    <property type="project" value="UniProtKB"/>
</dbReference>
<dbReference type="GO" id="GO:0015031">
    <property type="term" value="P:protein transport"/>
    <property type="evidence" value="ECO:0007669"/>
    <property type="project" value="UniProtKB-KW"/>
</dbReference>
<dbReference type="FunFam" id="1.10.287.1060:FF:000007">
    <property type="entry name" value="Charged multivesicular body protein 7"/>
    <property type="match status" value="1"/>
</dbReference>
<dbReference type="Gene3D" id="1.10.287.1060">
    <property type="entry name" value="ESAT-6-like"/>
    <property type="match status" value="1"/>
</dbReference>
<dbReference type="InterPro" id="IPR005024">
    <property type="entry name" value="Snf7_fam"/>
</dbReference>
<dbReference type="PANTHER" id="PTHR22761">
    <property type="entry name" value="CHARGED MULTIVESICULAR BODY PROTEIN"/>
    <property type="match status" value="1"/>
</dbReference>
<dbReference type="PANTHER" id="PTHR22761:SF21">
    <property type="entry name" value="CHARGED MULTIVESICULAR BODY PROTEIN 7"/>
    <property type="match status" value="1"/>
</dbReference>
<dbReference type="Pfam" id="PF03357">
    <property type="entry name" value="Snf7"/>
    <property type="match status" value="1"/>
</dbReference>
<dbReference type="Pfam" id="PF25239">
    <property type="entry name" value="WHD_CHMP7"/>
    <property type="match status" value="1"/>
</dbReference>
<name>CHMP7_XENTR</name>
<accession>Q5FW14</accession>
<keyword id="KW-0175">Coiled coil</keyword>
<keyword id="KW-0963">Cytoplasm</keyword>
<keyword id="KW-0539">Nucleus</keyword>
<keyword id="KW-0653">Protein transport</keyword>
<keyword id="KW-1185">Reference proteome</keyword>
<keyword id="KW-0813">Transport</keyword>
<protein>
    <recommendedName>
        <fullName>Charged multivesicular body protein 7</fullName>
    </recommendedName>
    <alternativeName>
        <fullName>Chromatin-modifying protein 7</fullName>
    </alternativeName>
</protein>